<feature type="chain" id="PRO_0000041072" description="Outer capsid protein VP4" evidence="1">
    <location>
        <begin position="1"/>
        <end position="775"/>
    </location>
</feature>
<feature type="chain" id="PRO_0000041073" description="Outer capsid protein VP8*" evidence="1">
    <location>
        <begin position="1"/>
        <end position="230"/>
    </location>
</feature>
<feature type="chain" id="PRO_0000041074" description="Outer capsid protein VP5*" evidence="1">
    <location>
        <begin position="247"/>
        <end position="775"/>
    </location>
</feature>
<feature type="region of interest" description="Spike head" evidence="1">
    <location>
        <begin position="65"/>
        <end position="223"/>
    </location>
</feature>
<feature type="region of interest" description="Spike body and stalk (antigen domain)" evidence="1">
    <location>
        <begin position="247"/>
        <end position="478"/>
    </location>
</feature>
<feature type="region of interest" description="Hydrophobic; possible role in virus entry into host cell" evidence="1">
    <location>
        <begin position="388"/>
        <end position="408"/>
    </location>
</feature>
<feature type="region of interest" description="Spike foot" evidence="1">
    <location>
        <begin position="509"/>
        <end position="775"/>
    </location>
</feature>
<feature type="coiled-coil region" evidence="1">
    <location>
        <begin position="483"/>
        <end position="510"/>
    </location>
</feature>
<feature type="short sequence motif" description="DGE motif; interaction with ITGA2/ITGB1 heterodimer" evidence="1">
    <location>
        <begin position="307"/>
        <end position="309"/>
    </location>
</feature>
<feature type="short sequence motif" description="YGL motif; interaction with ITGA4" evidence="1">
    <location>
        <begin position="447"/>
        <end position="449"/>
    </location>
</feature>
<feature type="short sequence motif" description="KID motif; interaction with HSPA8" evidence="1">
    <location>
        <begin position="643"/>
        <end position="645"/>
    </location>
</feature>
<feature type="site" description="Cleavage" evidence="1">
    <location>
        <begin position="230"/>
        <end position="231"/>
    </location>
</feature>
<feature type="site" description="Cleavage" evidence="1">
    <location>
        <begin position="240"/>
        <end position="241"/>
    </location>
</feature>
<feature type="site" description="Cleavage; associated with enhancement of infectivity" evidence="1">
    <location>
        <begin position="246"/>
        <end position="247"/>
    </location>
</feature>
<feature type="disulfide bond" evidence="1">
    <location>
        <begin position="317"/>
        <end position="379"/>
    </location>
</feature>
<feature type="sequence conflict" description="In Ref. 3; ABV53276." evidence="2" ref="3">
    <original>Q</original>
    <variation>K</variation>
    <location>
        <position position="31"/>
    </location>
</feature>
<feature type="sequence conflict" description="In Ref. 4." evidence="2" ref="4">
    <original>V</original>
    <variation>I</variation>
    <location>
        <position position="35"/>
    </location>
</feature>
<feature type="sequence conflict" description="In Ref. 3; ABV53276." evidence="2" ref="3">
    <original>LI</original>
    <variation>TV</variation>
    <location>
        <begin position="120"/>
        <end position="121"/>
    </location>
</feature>
<feature type="sequence conflict" description="In Ref. 3; ABV53276." evidence="2" ref="3">
    <original>S</original>
    <variation>R</variation>
    <location>
        <position position="131"/>
    </location>
</feature>
<feature type="sequence conflict" description="In Ref. 4." evidence="2" ref="4">
    <location>
        <position position="192"/>
    </location>
</feature>
<feature type="sequence conflict" description="In Ref. 4." evidence="2" ref="4">
    <original>SL</original>
    <variation>PS</variation>
    <location>
        <begin position="236"/>
        <end position="237"/>
    </location>
</feature>
<feature type="sequence conflict" description="In Ref. 3; ABV53276." evidence="2" ref="3">
    <original>P</original>
    <variation>L</variation>
    <location>
        <position position="283"/>
    </location>
</feature>
<feature type="sequence conflict" description="In Ref. 3; ABV53276." evidence="2" ref="3">
    <original>Y</original>
    <variation>S</variation>
    <location>
        <position position="331"/>
    </location>
</feature>
<feature type="sequence conflict" description="In Ref. 3; ABV53276." evidence="2" ref="3">
    <original>L</original>
    <variation>S</variation>
    <location>
        <position position="339"/>
    </location>
</feature>
<feature type="sequence conflict" description="In Ref. 3; ABV53276." evidence="2" ref="3">
    <original>D</original>
    <variation>N</variation>
    <location>
        <position position="385"/>
    </location>
</feature>
<feature type="sequence conflict" description="In Ref. 3; ABV53276." evidence="2" ref="3">
    <original>S</original>
    <variation>C</variation>
    <location>
        <position position="471"/>
    </location>
</feature>
<feature type="sequence conflict" description="In Ref. 3; ABV53276." evidence="2" ref="3">
    <original>H</original>
    <variation>D</variation>
    <location>
        <position position="538"/>
    </location>
</feature>
<feature type="sequence conflict" description="In Ref. 3; ABV53276." evidence="2" ref="3">
    <original>DSVNDV</original>
    <variation>NSLNDI</variation>
    <location>
        <begin position="602"/>
        <end position="607"/>
    </location>
</feature>
<feature type="sequence conflict" description="In Ref. 3; ABV53276." evidence="2" ref="3">
    <original>K</original>
    <variation>N</variation>
    <location>
        <position position="617"/>
    </location>
</feature>
<feature type="sequence conflict" description="In Ref. 3; ABV53276." evidence="2" ref="3">
    <original>K</original>
    <variation>M</variation>
    <location>
        <position position="646"/>
    </location>
</feature>
<feature type="sequence conflict" description="In Ref. 3; ABV53276." evidence="2" ref="3">
    <original>R</original>
    <variation>G</variation>
    <location>
        <position position="651"/>
    </location>
</feature>
<feature type="sequence conflict" description="In Ref. 3; ABV53276." evidence="2" ref="3">
    <original>E</original>
    <variation>T</variation>
    <location>
        <position position="660"/>
    </location>
</feature>
<feature type="sequence conflict" description="In Ref. 3; ABV53276." evidence="2" ref="3">
    <original>T</original>
    <variation>S</variation>
    <location>
        <position position="714"/>
    </location>
</feature>
<feature type="sequence conflict" description="In Ref. 3; ABV53276." evidence="2" ref="3">
    <original>F</original>
    <variation>L</variation>
    <location>
        <position position="741"/>
    </location>
</feature>
<feature type="sequence conflict" description="In Ref. 3; ABV53276." evidence="2" ref="3">
    <original>H</original>
    <variation>N</variation>
    <location>
        <position position="759"/>
    </location>
</feature>
<feature type="sequence conflict" description="In Ref. 3; ABV53276." evidence="2" ref="3">
    <original>R</original>
    <variation>K</variation>
    <location>
        <position position="774"/>
    </location>
</feature>
<accession>P11195</accession>
<accession>B3SRV1</accession>
<accession>Q70UN5</accession>
<organismHost>
    <name type="scientific">Homo sapiens</name>
    <name type="common">Human</name>
    <dbReference type="NCBI Taxonomy" id="9606"/>
</organismHost>
<comment type="function">
    <molecule>Outer capsid protein VP4</molecule>
    <text evidence="1">Spike-forming protein that mediates virion attachment to the host epithelial cell receptors and plays a major role in cell penetration, determination of host range restriction and virulence. Rotavirus attachment and entry into the host cell probably involves multiple sequential contacts between the outer capsid proteins VP4 and VP7, and the cell receptors. It is subsequently lost, together with VP7, following virus entry into the host cell. Following entry into the host cell, low intracellular or intravesicular Ca(2+) concentration probably causes the calcium-stabilized VP7 trimers to dissociate from the virion. This step is probably necessary for the membrane-disrupting entry step and the release of VP4, which is locked onto the virion by VP7. During the virus exit from the host cell, VP4 seems to be required to target the newly formed virions to the host cell lipid rafts.</text>
</comment>
<comment type="function">
    <molecule>Outer capsid protein VP5*</molecule>
    <text evidence="1">Forms the spike 'foot' and 'body' and acts as a membrane permeabilization protein that mediates release of viral particles from endosomal compartments into the cytoplasm. During entry, the part of VP5* that protrudes from the virus folds back on itself and reorganizes from a local dimer to a trimer. This reorganization may be linked to membrane penetration by exposing VP5* hydrophobic region. In integrin-dependent strains, VP5* targets the integrin heterodimer ITGA2/ITGB1 for cell attachment.</text>
</comment>
<comment type="function">
    <molecule>Outer capsid protein VP8*</molecule>
    <text evidence="1">Forms the head of the spikes and mediates the recognition of specific host cell surface glycans. It is the viral hemagglutinin and an important target of neutralizing antibodies. In sialic acid-dependent strains, VP8* binds to host cell sialic acid, most probably a ganglioside, providing the initial contact. In some other strains, VP8* mediates the attachment to histo-blood group antigens (HBGAs) for viral entry.</text>
</comment>
<comment type="subunit">
    <molecule>Outer capsid protein VP4</molecule>
    <text evidence="1">Homotrimer. VP4 adopts a dimeric appearance above the capsid surface, while forming a trimeric base anchored inside the capsid layer. Only hints of the third molecule are observed above the capsid surface. It probably performs a series of molecular rearrangements during viral entry. Prior to trypsin cleavage, it is flexible. The priming trypsin cleavage triggers its rearrangement into rigid spikes with approximate two-fold symmetry of their protruding parts. After an unknown second triggering event, cleaved VP4 may undergo another rearrangement, in which two VP5* subunits fold back on themselves and join a third subunit to form a tightly associated trimer, shaped like a folded umbrella. Interacts with VP6. Interacts with VP7.</text>
</comment>
<comment type="subunit">
    <molecule>Outer capsid protein VP5*</molecule>
    <text evidence="1">Homotrimer. The trimer is coiled-coil stabilized by its C-terminus, however, its N-terminus, known as antigen domain or 'body', seems to be flexible allowing it to self-associate either as a dimer or a trimer.</text>
</comment>
<comment type="subcellular location">
    <molecule>Outer capsid protein VP4</molecule>
    <subcellularLocation>
        <location evidence="1">Virion</location>
    </subcellularLocation>
    <subcellularLocation>
        <location evidence="1">Host rough endoplasmic reticulum</location>
    </subcellularLocation>
    <subcellularLocation>
        <location evidence="1">Host cell membrane</location>
    </subcellularLocation>
    <subcellularLocation>
        <location evidence="1">Host cytoplasm</location>
        <location evidence="1">Host cytoskeleton</location>
    </subcellularLocation>
    <subcellularLocation>
        <location evidence="1">Host endoplasmic reticulum-Golgi intermediate compartment</location>
    </subcellularLocation>
    <text evidence="1">The outer layer contains 180 copies of VP4, grouped as 60 dimers. Immature double-layered particles assembled in the cytoplasm bud across the membrane of the endoplasmic reticulum, acquiring during this process a transient lipid membrane that is modified with the ER resident viral glycoproteins NSP4 and VP7; these enveloped particles also contain VP4. As the particles move towards the interior of the ER cisternae, the transient lipid membrane and the non-structural protein NSP4 are lost, while the virus surface proteins VP4 and VP7 rearrange to form the outermost virus protein layer, yielding mature infectious triple-layered particles. VP4 also seems to associate with lipid rafts of the host cell membrane probably for the exit of the virus from the infected cell by an alternate pathway.</text>
</comment>
<comment type="subcellular location">
    <molecule>Outer capsid protein VP8*</molecule>
    <subcellularLocation>
        <location evidence="1">Virion</location>
    </subcellularLocation>
    <text evidence="1">Outer capsid protein.</text>
</comment>
<comment type="subcellular location">
    <molecule>Outer capsid protein VP5*</molecule>
    <subcellularLocation>
        <location evidence="1">Virion</location>
    </subcellularLocation>
    <text evidence="1">Outer capsid protein.</text>
</comment>
<comment type="domain">
    <molecule>Outer capsid protein VP4</molecule>
    <text evidence="1">The VP4 spike is divided into a foot, a stalk and body, and a head.</text>
</comment>
<comment type="PTM">
    <molecule>Outer capsid protein VP4</molecule>
    <text evidence="1">Proteolytic cleavage by trypsin results in activation of VP4 functions and greatly increases infectivity. The penetration into the host cell is dependent on trypsin treatment of VP4. It produces two peptides, VP5* and VP8* that remain associated with the virion. Cleavage of VP4 by trypsin probably occurs in vivo in the lumen of the intestine prior to infection of enterocytes. Trypsin seems to be incorporated into the three-layered viral particles but remains inactive as long as the viral outer capsid is intact and would only be activated upon the solubilization of the latter.</text>
</comment>
<comment type="miscellaneous">
    <text evidence="1">In group A rotaviruses, VP4 defines the P serotype.</text>
</comment>
<comment type="miscellaneous">
    <text evidence="1">Some rotavirus strains are neuraminidase-sensitive and require sialic acid to attach to the cell surface. Some rotavirus strains are integrin-dependent. Some rotavirus strains depend on ganglioside for their entry into the host cell. Hsp70 also seems to be involved in the entry of some strains.</text>
</comment>
<comment type="similarity">
    <text evidence="1">Belongs to the rotavirus VP4 family.</text>
</comment>
<organism>
    <name type="scientific">Rotavirus A (strain RVA/Human/United States/P/1974/G3P1A[8])</name>
    <name type="common">RV-A</name>
    <dbReference type="NCBI Taxonomy" id="10957"/>
    <lineage>
        <taxon>Viruses</taxon>
        <taxon>Riboviria</taxon>
        <taxon>Orthornavirae</taxon>
        <taxon>Duplornaviricota</taxon>
        <taxon>Resentoviricetes</taxon>
        <taxon>Reovirales</taxon>
        <taxon>Sedoreoviridae</taxon>
        <taxon>Rotavirus</taxon>
        <taxon>Rotavirus A</taxon>
    </lineage>
</organism>
<reference key="1">
    <citation type="journal article" date="1988" name="J. Virol.">
        <title>Sequence of the fourth gene of human rotaviruses recovered from asymptomatic or symptomatic infections.</title>
        <authorList>
            <person name="Gorziglia M."/>
            <person name="Green K.Y."/>
            <person name="Nishikawa K."/>
            <person name="Taniguchi K."/>
            <person name="Jones R.W."/>
            <person name="Kapikian A.Z."/>
            <person name="Chanock R.M."/>
        </authorList>
    </citation>
    <scope>NUCLEOTIDE SEQUENCE [GENOMIC RNA]</scope>
</reference>
<reference key="2">
    <citation type="submission" date="2003-01" db="EMBL/GenBank/DDBJ databases">
        <authorList>
            <person name="Gentsch J.R."/>
        </authorList>
    </citation>
    <scope>NUCLEOTIDE SEQUENCE [GENOMIC RNA]</scope>
</reference>
<reference key="3">
    <citation type="journal article" date="2008" name="J. Virol.">
        <title>Group A human rotavirus genomics: evidence that gene constellations are influenced by viral protein interactions.</title>
        <authorList>
            <person name="Heiman E.M."/>
            <person name="McDonald S.M."/>
            <person name="Barro M."/>
            <person name="Taraporewala Z.F."/>
            <person name="Bar-Magen T."/>
            <person name="Patton J.T."/>
        </authorList>
    </citation>
    <scope>NUCLEOTIDE SEQUENCE [GENOMIC RNA]</scope>
</reference>
<reference key="4">
    <citation type="journal article" date="1986" name="Proc. Natl. Acad. Sci. U.S.A.">
        <title>Conservation of amino acid sequence of VP8 and cleavage region of 84-kDa outer capsid protein among rotaviruses recovered from asymptomatic neonatal infection.</title>
        <authorList>
            <person name="Gorziglia M."/>
            <person name="Hoshino Y."/>
            <person name="Buckler-White A."/>
            <person name="Blumentals I."/>
            <person name="Glass R."/>
            <person name="Flores J."/>
            <person name="Kapikian A.Z."/>
            <person name="Chanock R.M."/>
        </authorList>
    </citation>
    <scope>NUCLEOTIDE SEQUENCE [GENOMIC RNA] OF 1-280</scope>
</reference>
<evidence type="ECO:0000255" key="1">
    <source>
        <dbReference type="HAMAP-Rule" id="MF_04132"/>
    </source>
</evidence>
<evidence type="ECO:0000305" key="2"/>
<keyword id="KW-0167">Capsid protein</keyword>
<keyword id="KW-0175">Coiled coil</keyword>
<keyword id="KW-1015">Disulfide bond</keyword>
<keyword id="KW-0348">Hemagglutinin</keyword>
<keyword id="KW-1032">Host cell membrane</keyword>
<keyword id="KW-1035">Host cytoplasm</keyword>
<keyword id="KW-1037">Host cytoskeleton</keyword>
<keyword id="KW-1038">Host endoplasmic reticulum</keyword>
<keyword id="KW-1043">Host membrane</keyword>
<keyword id="KW-0945">Host-virus interaction</keyword>
<keyword id="KW-0472">Membrane</keyword>
<keyword id="KW-1152">Outer capsid protein</keyword>
<keyword id="KW-1161">Viral attachment to host cell</keyword>
<keyword id="KW-1162">Viral penetration into host cytoplasm</keyword>
<keyword id="KW-1173">Viral penetration via permeabilization of host membrane</keyword>
<keyword id="KW-0946">Virion</keyword>
<keyword id="KW-1160">Virus entry into host cell</keyword>
<dbReference type="EMBL" id="AJ540228">
    <property type="protein sequence ID" value="CAD62681.1"/>
    <property type="molecule type" value="Genomic_RNA"/>
</dbReference>
<dbReference type="EMBL" id="EF672598">
    <property type="protein sequence ID" value="ABV53276.1"/>
    <property type="molecule type" value="Genomic_RNA"/>
</dbReference>
<dbReference type="PIR" id="C28839">
    <property type="entry name" value="VPXRW5"/>
</dbReference>
<dbReference type="SMR" id="P11195"/>
<dbReference type="Proteomes" id="UP000007047">
    <property type="component" value="Genome"/>
</dbReference>
<dbReference type="GO" id="GO:0044172">
    <property type="term" value="C:host cell endoplasmic reticulum-Golgi intermediate compartment"/>
    <property type="evidence" value="ECO:0007669"/>
    <property type="project" value="UniProtKB-SubCell"/>
</dbReference>
<dbReference type="GO" id="GO:0020002">
    <property type="term" value="C:host cell plasma membrane"/>
    <property type="evidence" value="ECO:0007669"/>
    <property type="project" value="UniProtKB-SubCell"/>
</dbReference>
<dbReference type="GO" id="GO:0044168">
    <property type="term" value="C:host cell rough endoplasmic reticulum"/>
    <property type="evidence" value="ECO:0007669"/>
    <property type="project" value="UniProtKB-SubCell"/>
</dbReference>
<dbReference type="GO" id="GO:0044163">
    <property type="term" value="C:host cytoskeleton"/>
    <property type="evidence" value="ECO:0007669"/>
    <property type="project" value="UniProtKB-SubCell"/>
</dbReference>
<dbReference type="GO" id="GO:0016020">
    <property type="term" value="C:membrane"/>
    <property type="evidence" value="ECO:0007669"/>
    <property type="project" value="UniProtKB-KW"/>
</dbReference>
<dbReference type="GO" id="GO:0039624">
    <property type="term" value="C:viral outer capsid"/>
    <property type="evidence" value="ECO:0007669"/>
    <property type="project" value="UniProtKB-UniRule"/>
</dbReference>
<dbReference type="GO" id="GO:0039665">
    <property type="term" value="P:permeabilization of host organelle membrane involved in viral entry into host cell"/>
    <property type="evidence" value="ECO:0007669"/>
    <property type="project" value="UniProtKB-UniRule"/>
</dbReference>
<dbReference type="GO" id="GO:0019062">
    <property type="term" value="P:virion attachment to host cell"/>
    <property type="evidence" value="ECO:0007669"/>
    <property type="project" value="UniProtKB-UniRule"/>
</dbReference>
<dbReference type="FunFam" id="2.60.120.200:FF:000303">
    <property type="entry name" value="Outer capsid protein VP4"/>
    <property type="match status" value="1"/>
</dbReference>
<dbReference type="Gene3D" id="1.20.5.170">
    <property type="match status" value="1"/>
</dbReference>
<dbReference type="Gene3D" id="2.60.120.200">
    <property type="match status" value="1"/>
</dbReference>
<dbReference type="HAMAP" id="MF_04132">
    <property type="entry name" value="Rota_A_VP4"/>
    <property type="match status" value="1"/>
</dbReference>
<dbReference type="HAMAP" id="MF_04125">
    <property type="entry name" value="Rota_VP4"/>
    <property type="match status" value="1"/>
</dbReference>
<dbReference type="InterPro" id="IPR013320">
    <property type="entry name" value="ConA-like_dom_sf"/>
</dbReference>
<dbReference type="InterPro" id="IPR042546">
    <property type="entry name" value="Rota_A_VP4"/>
</dbReference>
<dbReference type="InterPro" id="IPR035330">
    <property type="entry name" value="Rota_VP4_MID"/>
</dbReference>
<dbReference type="InterPro" id="IPR038017">
    <property type="entry name" value="Rota_VP4_MID_sf"/>
</dbReference>
<dbReference type="InterPro" id="IPR000416">
    <property type="entry name" value="VP4_concanavalin-like"/>
</dbReference>
<dbReference type="InterPro" id="IPR035329">
    <property type="entry name" value="VP4_helical"/>
</dbReference>
<dbReference type="Pfam" id="PF17477">
    <property type="entry name" value="Rota_VP4_MID"/>
    <property type="match status" value="1"/>
</dbReference>
<dbReference type="Pfam" id="PF00426">
    <property type="entry name" value="VP4_haemagglut"/>
    <property type="match status" value="1"/>
</dbReference>
<dbReference type="Pfam" id="PF17478">
    <property type="entry name" value="VP4_helical"/>
    <property type="match status" value="1"/>
</dbReference>
<dbReference type="SUPFAM" id="SSF49899">
    <property type="entry name" value="Concanavalin A-like lectins/glucanases"/>
    <property type="match status" value="1"/>
</dbReference>
<dbReference type="SUPFAM" id="SSF111379">
    <property type="entry name" value="VP4 membrane interaction domain"/>
    <property type="match status" value="1"/>
</dbReference>
<sequence length="775" mass="87688">MASLIYRQLLTNSYSVDLHDEIEQIGSEKTQNVTVNPGPFAQTRYAPVNWGHGEINDSTTVELILDGPYQPTTFTPPTDYWILINSNTNGVVYESTNNSDFWTAVVAVEPHVNPVDRQYLIFGENKQFNVSNDSDKWKFLEMFRSSSQNEFYNRRTLTSDTRLVGILKYGGRVWTFHGETPRATTDSSNTANLNNISITIHSEFYIIPRSQESKCNEYINNGLPPIQNTRNVVPLSLSSRSIQYKRAQVNEDITISKTSLWKEMQYNGDIIIRFKFGNSIIKPGGLGYKWSEISFKAANYQYNYLRDGEQVTAHTTCSVNGINNFSYNGGYLPTDFSVLRYEVIKENSYVYVDYWDDSKAFRNMVYVRSLAANLNSVKCTGGSYDFSIPVGAWPVMNGGAVSLHFAGVTLSTQFTDFVSLNSLRFRFSLTVDEPSFSILRTRTVNLYGLPAANPNNGNEYYEISGRFSLISLVPTNDDYQTPIMNSVTVRQDLERQLTDLREEFNSLSQEIAMSQLIDLALLPLDMFSMFSGIKSTIHLTKSMATSVMKKFRKSKLATSVSEMTNSLSDAASSASRSVSVRSNISAISNWTNVSDDVSNVTDSVNDVSTQTSTISKKLRLKEMITQTEGMSFDDISAAVLKTKIDKSTQIRKNTLPDIVEEASEKFIPKRSYRILKDDEVMEINTEGKFFAYKIDTLNEVPFDVNKFTELVTNTPVISAIIDFKTLKNLNDNYGITRTEAFNLIKSNPNVLRNFINQNHPIIRNRIEQLILQCRL</sequence>
<proteinExistence type="inferred from homology"/>
<protein>
    <recommendedName>
        <fullName evidence="1">Outer capsid protein VP4</fullName>
    </recommendedName>
    <alternativeName>
        <fullName evidence="1">Hemagglutinin</fullName>
    </alternativeName>
    <component>
        <recommendedName>
            <fullName evidence="1">Outer capsid protein VP8*</fullName>
        </recommendedName>
    </component>
    <component>
        <recommendedName>
            <fullName evidence="1">Outer capsid protein VP5*</fullName>
        </recommendedName>
    </component>
</protein>
<name>VP4_ROTHP</name>